<keyword id="KW-0004">4Fe-4S</keyword>
<keyword id="KW-0963">Cytoplasm</keyword>
<keyword id="KW-1015">Disulfide bond</keyword>
<keyword id="KW-0408">Iron</keyword>
<keyword id="KW-0411">Iron-sulfur</keyword>
<keyword id="KW-0479">Metal-binding</keyword>
<keyword id="KW-0489">Methyltransferase</keyword>
<keyword id="KW-1185">Reference proteome</keyword>
<keyword id="KW-0698">rRNA processing</keyword>
<keyword id="KW-0949">S-adenosyl-L-methionine</keyword>
<keyword id="KW-0808">Transferase</keyword>
<keyword id="KW-0819">tRNA processing</keyword>
<comment type="function">
    <text evidence="1">Specifically methylates position 2 of adenine 2503 in 23S rRNA and position 2 of adenine 37 in tRNAs. m2A2503 modification seems to play a crucial role in the proofreading step occurring at the peptidyl transferase center and thus would serve to optimize ribosomal fidelity.</text>
</comment>
<comment type="catalytic activity">
    <reaction evidence="1">
        <text>adenosine(2503) in 23S rRNA + 2 reduced [2Fe-2S]-[ferredoxin] + 2 S-adenosyl-L-methionine = 2-methyladenosine(2503) in 23S rRNA + 5'-deoxyadenosine + L-methionine + 2 oxidized [2Fe-2S]-[ferredoxin] + S-adenosyl-L-homocysteine</text>
        <dbReference type="Rhea" id="RHEA:42916"/>
        <dbReference type="Rhea" id="RHEA-COMP:10000"/>
        <dbReference type="Rhea" id="RHEA-COMP:10001"/>
        <dbReference type="Rhea" id="RHEA-COMP:10152"/>
        <dbReference type="Rhea" id="RHEA-COMP:10282"/>
        <dbReference type="ChEBI" id="CHEBI:17319"/>
        <dbReference type="ChEBI" id="CHEBI:33737"/>
        <dbReference type="ChEBI" id="CHEBI:33738"/>
        <dbReference type="ChEBI" id="CHEBI:57844"/>
        <dbReference type="ChEBI" id="CHEBI:57856"/>
        <dbReference type="ChEBI" id="CHEBI:59789"/>
        <dbReference type="ChEBI" id="CHEBI:74411"/>
        <dbReference type="ChEBI" id="CHEBI:74497"/>
        <dbReference type="EC" id="2.1.1.192"/>
    </reaction>
</comment>
<comment type="catalytic activity">
    <reaction evidence="1">
        <text>adenosine(37) in tRNA + 2 reduced [2Fe-2S]-[ferredoxin] + 2 S-adenosyl-L-methionine = 2-methyladenosine(37) in tRNA + 5'-deoxyadenosine + L-methionine + 2 oxidized [2Fe-2S]-[ferredoxin] + S-adenosyl-L-homocysteine</text>
        <dbReference type="Rhea" id="RHEA:43332"/>
        <dbReference type="Rhea" id="RHEA-COMP:10000"/>
        <dbReference type="Rhea" id="RHEA-COMP:10001"/>
        <dbReference type="Rhea" id="RHEA-COMP:10162"/>
        <dbReference type="Rhea" id="RHEA-COMP:10485"/>
        <dbReference type="ChEBI" id="CHEBI:17319"/>
        <dbReference type="ChEBI" id="CHEBI:33737"/>
        <dbReference type="ChEBI" id="CHEBI:33738"/>
        <dbReference type="ChEBI" id="CHEBI:57844"/>
        <dbReference type="ChEBI" id="CHEBI:57856"/>
        <dbReference type="ChEBI" id="CHEBI:59789"/>
        <dbReference type="ChEBI" id="CHEBI:74411"/>
        <dbReference type="ChEBI" id="CHEBI:74497"/>
        <dbReference type="EC" id="2.1.1.192"/>
    </reaction>
</comment>
<comment type="cofactor">
    <cofactor evidence="1">
        <name>[4Fe-4S] cluster</name>
        <dbReference type="ChEBI" id="CHEBI:49883"/>
    </cofactor>
    <text evidence="1">Binds 1 [4Fe-4S] cluster. The cluster is coordinated with 3 cysteines and an exchangeable S-adenosyl-L-methionine.</text>
</comment>
<comment type="subcellular location">
    <subcellularLocation>
        <location evidence="1">Cytoplasm</location>
    </subcellularLocation>
</comment>
<comment type="miscellaneous">
    <text evidence="1">Reaction proceeds by a ping-pong mechanism involving intermediate methylation of a conserved cysteine residue.</text>
</comment>
<comment type="similarity">
    <text evidence="1">Belongs to the radical SAM superfamily. RlmN family.</text>
</comment>
<evidence type="ECO:0000255" key="1">
    <source>
        <dbReference type="HAMAP-Rule" id="MF_01849"/>
    </source>
</evidence>
<evidence type="ECO:0000255" key="2">
    <source>
        <dbReference type="PROSITE-ProRule" id="PRU01266"/>
    </source>
</evidence>
<dbReference type="EC" id="2.1.1.192" evidence="1"/>
<dbReference type="EMBL" id="CP000489">
    <property type="protein sequence ID" value="ABL70592.1"/>
    <property type="molecule type" value="Genomic_DNA"/>
</dbReference>
<dbReference type="RefSeq" id="WP_011748785.1">
    <property type="nucleotide sequence ID" value="NC_008686.1"/>
</dbReference>
<dbReference type="SMR" id="A1B4Z8"/>
<dbReference type="STRING" id="318586.Pden_2505"/>
<dbReference type="EnsemblBacteria" id="ABL70592">
    <property type="protein sequence ID" value="ABL70592"/>
    <property type="gene ID" value="Pden_2505"/>
</dbReference>
<dbReference type="GeneID" id="93450898"/>
<dbReference type="KEGG" id="pde:Pden_2505"/>
<dbReference type="eggNOG" id="COG0820">
    <property type="taxonomic scope" value="Bacteria"/>
</dbReference>
<dbReference type="HOGENOM" id="CLU_029101_0_0_5"/>
<dbReference type="OrthoDB" id="9793973at2"/>
<dbReference type="Proteomes" id="UP000000361">
    <property type="component" value="Chromosome 1"/>
</dbReference>
<dbReference type="GO" id="GO:0005737">
    <property type="term" value="C:cytoplasm"/>
    <property type="evidence" value="ECO:0007669"/>
    <property type="project" value="UniProtKB-SubCell"/>
</dbReference>
<dbReference type="GO" id="GO:0051539">
    <property type="term" value="F:4 iron, 4 sulfur cluster binding"/>
    <property type="evidence" value="ECO:0007669"/>
    <property type="project" value="UniProtKB-UniRule"/>
</dbReference>
<dbReference type="GO" id="GO:0046872">
    <property type="term" value="F:metal ion binding"/>
    <property type="evidence" value="ECO:0007669"/>
    <property type="project" value="UniProtKB-KW"/>
</dbReference>
<dbReference type="GO" id="GO:0070040">
    <property type="term" value="F:rRNA (adenine(2503)-C2-)-methyltransferase activity"/>
    <property type="evidence" value="ECO:0007669"/>
    <property type="project" value="UniProtKB-UniRule"/>
</dbReference>
<dbReference type="GO" id="GO:0019843">
    <property type="term" value="F:rRNA binding"/>
    <property type="evidence" value="ECO:0007669"/>
    <property type="project" value="UniProtKB-UniRule"/>
</dbReference>
<dbReference type="GO" id="GO:0002935">
    <property type="term" value="F:tRNA (adenine(37)-C2)-methyltransferase activity"/>
    <property type="evidence" value="ECO:0007669"/>
    <property type="project" value="UniProtKB-UniRule"/>
</dbReference>
<dbReference type="GO" id="GO:0000049">
    <property type="term" value="F:tRNA binding"/>
    <property type="evidence" value="ECO:0007669"/>
    <property type="project" value="UniProtKB-UniRule"/>
</dbReference>
<dbReference type="GO" id="GO:0070475">
    <property type="term" value="P:rRNA base methylation"/>
    <property type="evidence" value="ECO:0007669"/>
    <property type="project" value="UniProtKB-UniRule"/>
</dbReference>
<dbReference type="GO" id="GO:0030488">
    <property type="term" value="P:tRNA methylation"/>
    <property type="evidence" value="ECO:0007669"/>
    <property type="project" value="UniProtKB-UniRule"/>
</dbReference>
<dbReference type="CDD" id="cd01335">
    <property type="entry name" value="Radical_SAM"/>
    <property type="match status" value="1"/>
</dbReference>
<dbReference type="FunFam" id="3.20.20.70:FF:000008">
    <property type="entry name" value="Dual-specificity RNA methyltransferase RlmN"/>
    <property type="match status" value="1"/>
</dbReference>
<dbReference type="Gene3D" id="1.10.150.530">
    <property type="match status" value="1"/>
</dbReference>
<dbReference type="Gene3D" id="3.20.20.70">
    <property type="entry name" value="Aldolase class I"/>
    <property type="match status" value="1"/>
</dbReference>
<dbReference type="HAMAP" id="MF_01849">
    <property type="entry name" value="RNA_methyltr_RlmN"/>
    <property type="match status" value="1"/>
</dbReference>
<dbReference type="InterPro" id="IPR013785">
    <property type="entry name" value="Aldolase_TIM"/>
</dbReference>
<dbReference type="InterPro" id="IPR040072">
    <property type="entry name" value="Methyltransferase_A"/>
</dbReference>
<dbReference type="InterPro" id="IPR048641">
    <property type="entry name" value="RlmN_N"/>
</dbReference>
<dbReference type="InterPro" id="IPR027492">
    <property type="entry name" value="RNA_MTrfase_RlmN"/>
</dbReference>
<dbReference type="InterPro" id="IPR004383">
    <property type="entry name" value="rRNA_lsu_MTrfase_RlmN/Cfr"/>
</dbReference>
<dbReference type="InterPro" id="IPR007197">
    <property type="entry name" value="rSAM"/>
</dbReference>
<dbReference type="NCBIfam" id="TIGR00048">
    <property type="entry name" value="rRNA_mod_RlmN"/>
    <property type="match status" value="1"/>
</dbReference>
<dbReference type="PANTHER" id="PTHR30544">
    <property type="entry name" value="23S RRNA METHYLTRANSFERASE"/>
    <property type="match status" value="1"/>
</dbReference>
<dbReference type="PANTHER" id="PTHR30544:SF5">
    <property type="entry name" value="RADICAL SAM CORE DOMAIN-CONTAINING PROTEIN"/>
    <property type="match status" value="1"/>
</dbReference>
<dbReference type="Pfam" id="PF04055">
    <property type="entry name" value="Radical_SAM"/>
    <property type="match status" value="1"/>
</dbReference>
<dbReference type="Pfam" id="PF21016">
    <property type="entry name" value="RlmN_N"/>
    <property type="match status" value="1"/>
</dbReference>
<dbReference type="PIRSF" id="PIRSF006004">
    <property type="entry name" value="CHP00048"/>
    <property type="match status" value="1"/>
</dbReference>
<dbReference type="SFLD" id="SFLDF00275">
    <property type="entry name" value="adenosine_C2_methyltransferase"/>
    <property type="match status" value="1"/>
</dbReference>
<dbReference type="SFLD" id="SFLDG01062">
    <property type="entry name" value="methyltransferase_(Class_A)"/>
    <property type="match status" value="1"/>
</dbReference>
<dbReference type="SUPFAM" id="SSF102114">
    <property type="entry name" value="Radical SAM enzymes"/>
    <property type="match status" value="1"/>
</dbReference>
<dbReference type="PROSITE" id="PS51918">
    <property type="entry name" value="RADICAL_SAM"/>
    <property type="match status" value="1"/>
</dbReference>
<gene>
    <name evidence="1" type="primary">rlmN</name>
    <name type="ordered locus">Pden_2505</name>
</gene>
<organism>
    <name type="scientific">Paracoccus denitrificans (strain Pd 1222)</name>
    <dbReference type="NCBI Taxonomy" id="318586"/>
    <lineage>
        <taxon>Bacteria</taxon>
        <taxon>Pseudomonadati</taxon>
        <taxon>Pseudomonadota</taxon>
        <taxon>Alphaproteobacteria</taxon>
        <taxon>Rhodobacterales</taxon>
        <taxon>Paracoccaceae</taxon>
        <taxon>Paracoccus</taxon>
    </lineage>
</organism>
<feature type="chain" id="PRO_0000350298" description="Dual-specificity RNA methyltransferase RlmN">
    <location>
        <begin position="1"/>
        <end position="391"/>
    </location>
</feature>
<feature type="domain" description="Radical SAM core" evidence="2">
    <location>
        <begin position="121"/>
        <end position="363"/>
    </location>
</feature>
<feature type="active site" description="Proton acceptor" evidence="1">
    <location>
        <position position="115"/>
    </location>
</feature>
<feature type="active site" description="S-methylcysteine intermediate" evidence="1">
    <location>
        <position position="368"/>
    </location>
</feature>
<feature type="binding site" evidence="1">
    <location>
        <position position="135"/>
    </location>
    <ligand>
        <name>[4Fe-4S] cluster</name>
        <dbReference type="ChEBI" id="CHEBI:49883"/>
        <note>4Fe-4S-S-AdoMet</note>
    </ligand>
</feature>
<feature type="binding site" evidence="1">
    <location>
        <position position="139"/>
    </location>
    <ligand>
        <name>[4Fe-4S] cluster</name>
        <dbReference type="ChEBI" id="CHEBI:49883"/>
        <note>4Fe-4S-S-AdoMet</note>
    </ligand>
</feature>
<feature type="binding site" evidence="1">
    <location>
        <position position="142"/>
    </location>
    <ligand>
        <name>[4Fe-4S] cluster</name>
        <dbReference type="ChEBI" id="CHEBI:49883"/>
        <note>4Fe-4S-S-AdoMet</note>
    </ligand>
</feature>
<feature type="binding site" evidence="1">
    <location>
        <begin position="194"/>
        <end position="195"/>
    </location>
    <ligand>
        <name>S-adenosyl-L-methionine</name>
        <dbReference type="ChEBI" id="CHEBI:59789"/>
    </ligand>
</feature>
<feature type="binding site" evidence="1">
    <location>
        <position position="226"/>
    </location>
    <ligand>
        <name>S-adenosyl-L-methionine</name>
        <dbReference type="ChEBI" id="CHEBI:59789"/>
    </ligand>
</feature>
<feature type="binding site" evidence="1">
    <location>
        <begin position="248"/>
        <end position="250"/>
    </location>
    <ligand>
        <name>S-adenosyl-L-methionine</name>
        <dbReference type="ChEBI" id="CHEBI:59789"/>
    </ligand>
</feature>
<feature type="binding site" evidence="1">
    <location>
        <position position="325"/>
    </location>
    <ligand>
        <name>S-adenosyl-L-methionine</name>
        <dbReference type="ChEBI" id="CHEBI:59789"/>
    </ligand>
</feature>
<feature type="disulfide bond" description="(transient)" evidence="1">
    <location>
        <begin position="128"/>
        <end position="368"/>
    </location>
</feature>
<proteinExistence type="inferred from homology"/>
<accession>A1B4Z8</accession>
<reference key="1">
    <citation type="submission" date="2006-12" db="EMBL/GenBank/DDBJ databases">
        <title>Complete sequence of chromosome 1 of Paracoccus denitrificans PD1222.</title>
        <authorList>
            <person name="Copeland A."/>
            <person name="Lucas S."/>
            <person name="Lapidus A."/>
            <person name="Barry K."/>
            <person name="Detter J.C."/>
            <person name="Glavina del Rio T."/>
            <person name="Hammon N."/>
            <person name="Israni S."/>
            <person name="Dalin E."/>
            <person name="Tice H."/>
            <person name="Pitluck S."/>
            <person name="Munk A.C."/>
            <person name="Brettin T."/>
            <person name="Bruce D."/>
            <person name="Han C."/>
            <person name="Tapia R."/>
            <person name="Gilna P."/>
            <person name="Schmutz J."/>
            <person name="Larimer F."/>
            <person name="Land M."/>
            <person name="Hauser L."/>
            <person name="Kyrpides N."/>
            <person name="Lykidis A."/>
            <person name="Spiro S."/>
            <person name="Richardson D.J."/>
            <person name="Moir J.W.B."/>
            <person name="Ferguson S.J."/>
            <person name="van Spanning R.J.M."/>
            <person name="Richardson P."/>
        </authorList>
    </citation>
    <scope>NUCLEOTIDE SEQUENCE [LARGE SCALE GENOMIC DNA]</scope>
    <source>
        <strain>Pd 1222</strain>
    </source>
</reference>
<name>RLMN_PARDP</name>
<sequence>MNAAPITQDLLTIPRKLPETAGRNLVGLTREQLHEALIQAGTPERQARMRVGQIWQWIYHWGVRDFAQMTNLAKDYRALLAENFEIALPEIVTRQISADGTRKYLLRISGGHEVETVYIPEENRGTLCISSQVGCTLTCSFCHTGTQKLVRNLTAGEIVGQVMVARDDLGEWPKPGAPKDETRLVSNVVLMGMGEPLYNFDNVRDAMKVVMDGEGISLSRRRITLSTSGIVPEIAKTAEEIGCLLAVSFHATTDETRDKLVPVNRKWNIETLLNALREYPRLSNSERITFEYVMLDGVNDSDEDARRLVRLIRGIPAKVNLIPFNEWPGSPYRRSGWERIEAFADIVHKAGYASPIRTPRGEDIMAACGQLKSATERGRKTAAQIAAEARA</sequence>
<protein>
    <recommendedName>
        <fullName evidence="1">Dual-specificity RNA methyltransferase RlmN</fullName>
        <ecNumber evidence="1">2.1.1.192</ecNumber>
    </recommendedName>
    <alternativeName>
        <fullName evidence="1">23S rRNA (adenine(2503)-C(2))-methyltransferase</fullName>
    </alternativeName>
    <alternativeName>
        <fullName evidence="1">23S rRNA m2A2503 methyltransferase</fullName>
    </alternativeName>
    <alternativeName>
        <fullName evidence="1">Ribosomal RNA large subunit methyltransferase N</fullName>
    </alternativeName>
    <alternativeName>
        <fullName evidence="1">tRNA (adenine(37)-C(2))-methyltransferase</fullName>
    </alternativeName>
    <alternativeName>
        <fullName evidence="1">tRNA m2A37 methyltransferase</fullName>
    </alternativeName>
</protein>